<name>YIDC_XYLFM</name>
<feature type="chain" id="PRO_1000187718" description="Membrane protein insertase YidC">
    <location>
        <begin position="1"/>
        <end position="565"/>
    </location>
</feature>
<feature type="transmembrane region" description="Helical" evidence="1">
    <location>
        <begin position="6"/>
        <end position="26"/>
    </location>
</feature>
<feature type="transmembrane region" description="Helical" evidence="1">
    <location>
        <begin position="348"/>
        <end position="368"/>
    </location>
</feature>
<feature type="transmembrane region" description="Helical" evidence="1">
    <location>
        <begin position="370"/>
        <end position="390"/>
    </location>
</feature>
<feature type="transmembrane region" description="Helical" evidence="1">
    <location>
        <begin position="437"/>
        <end position="457"/>
    </location>
</feature>
<feature type="transmembrane region" description="Helical" evidence="1">
    <location>
        <begin position="479"/>
        <end position="499"/>
    </location>
</feature>
<feature type="transmembrane region" description="Helical" evidence="1">
    <location>
        <begin position="516"/>
        <end position="536"/>
    </location>
</feature>
<proteinExistence type="inferred from homology"/>
<sequence>MNQTRVLLIFSWLTVATLLWMDWGKNKNETLEISASHNLGVDSHLELEHAVPQINAGAVPVQKDSQLIAAAPKVPVINVTTDVLQLKLDGFSILAADLLRFPQSKDRGAKPIKLLTDDPNYPYSATTGWVSQSNSPVPNLSTFLPEQSGVSYKLANDQDRLVVPFVWTAANGVSIRRTFTFERGRYAILIRDEIRNSGETPWNAYVFRKLSRVPIPNILNRAMTNPDSFSFNGAVWYSEKGGYERRAFKDYMNDGGLNREIGGGWIALLQHHFFTAWIPQKDQASLYLLAQNGSRDIAELRGPAFTVAPGQSTMTEARLWVGPKLVEQITKEHVKGLDRVVDYSRFQLMALIGQGLFWILSHLNSLLHNWGWAIVGLVVLLRIAMYPLSAAQYKSAAKMRKFQPRLQQLKERYGEDRQKFQQAMMELYKKEKINPMGGCFPILIQMPIFFALYWVLVESVELRQAPWLGWIQDLTTRDPYFILPLLNIVIMWATQKLTPTPAGMDPIAGKMMQVMPLIFGVMMAFVPSGLALYWVINGGLNLLIQWWMIHQYADFSRKRSRENIK</sequence>
<reference key="1">
    <citation type="journal article" date="2010" name="J. Bacteriol.">
        <title>Whole genome sequences of two Xylella fastidiosa strains (M12 and M23) causing almond leaf scorch disease in California.</title>
        <authorList>
            <person name="Chen J."/>
            <person name="Xie G."/>
            <person name="Han S."/>
            <person name="Chertkov O."/>
            <person name="Sims D."/>
            <person name="Civerolo E.L."/>
        </authorList>
    </citation>
    <scope>NUCLEOTIDE SEQUENCE [LARGE SCALE GENOMIC DNA]</scope>
    <source>
        <strain>M12</strain>
    </source>
</reference>
<dbReference type="EMBL" id="CP000941">
    <property type="protein sequence ID" value="ACA13156.1"/>
    <property type="molecule type" value="Genomic_DNA"/>
</dbReference>
<dbReference type="RefSeq" id="WP_004085095.1">
    <property type="nucleotide sequence ID" value="NC_010513.1"/>
</dbReference>
<dbReference type="SMR" id="B0U6I1"/>
<dbReference type="KEGG" id="xfm:Xfasm12_2314"/>
<dbReference type="HOGENOM" id="CLU_016535_3_0_6"/>
<dbReference type="GO" id="GO:0005886">
    <property type="term" value="C:plasma membrane"/>
    <property type="evidence" value="ECO:0007669"/>
    <property type="project" value="UniProtKB-SubCell"/>
</dbReference>
<dbReference type="GO" id="GO:0032977">
    <property type="term" value="F:membrane insertase activity"/>
    <property type="evidence" value="ECO:0007669"/>
    <property type="project" value="InterPro"/>
</dbReference>
<dbReference type="GO" id="GO:0051205">
    <property type="term" value="P:protein insertion into membrane"/>
    <property type="evidence" value="ECO:0007669"/>
    <property type="project" value="TreeGrafter"/>
</dbReference>
<dbReference type="GO" id="GO:0015031">
    <property type="term" value="P:protein transport"/>
    <property type="evidence" value="ECO:0007669"/>
    <property type="project" value="UniProtKB-KW"/>
</dbReference>
<dbReference type="CDD" id="cd20070">
    <property type="entry name" value="5TM_YidC_Alb3"/>
    <property type="match status" value="1"/>
</dbReference>
<dbReference type="CDD" id="cd19961">
    <property type="entry name" value="EcYidC-like_peri"/>
    <property type="match status" value="1"/>
</dbReference>
<dbReference type="Gene3D" id="2.70.98.90">
    <property type="match status" value="1"/>
</dbReference>
<dbReference type="HAMAP" id="MF_01810">
    <property type="entry name" value="YidC_type1"/>
    <property type="match status" value="1"/>
</dbReference>
<dbReference type="InterPro" id="IPR019998">
    <property type="entry name" value="Membr_insert_YidC"/>
</dbReference>
<dbReference type="InterPro" id="IPR028053">
    <property type="entry name" value="Membr_insert_YidC_N"/>
</dbReference>
<dbReference type="InterPro" id="IPR001708">
    <property type="entry name" value="YidC/ALB3/OXA1/COX18"/>
</dbReference>
<dbReference type="InterPro" id="IPR028055">
    <property type="entry name" value="YidC/Oxa/ALB_C"/>
</dbReference>
<dbReference type="InterPro" id="IPR047196">
    <property type="entry name" value="YidC_ALB_C"/>
</dbReference>
<dbReference type="InterPro" id="IPR038221">
    <property type="entry name" value="YidC_periplasmic_sf"/>
</dbReference>
<dbReference type="NCBIfam" id="NF002352">
    <property type="entry name" value="PRK01318.1-3"/>
    <property type="match status" value="1"/>
</dbReference>
<dbReference type="NCBIfam" id="TIGR03593">
    <property type="entry name" value="yidC_nterm"/>
    <property type="match status" value="1"/>
</dbReference>
<dbReference type="NCBIfam" id="TIGR03592">
    <property type="entry name" value="yidC_oxa1_cterm"/>
    <property type="match status" value="1"/>
</dbReference>
<dbReference type="PANTHER" id="PTHR12428:SF65">
    <property type="entry name" value="CYTOCHROME C OXIDASE ASSEMBLY PROTEIN COX18, MITOCHONDRIAL"/>
    <property type="match status" value="1"/>
</dbReference>
<dbReference type="PANTHER" id="PTHR12428">
    <property type="entry name" value="OXA1"/>
    <property type="match status" value="1"/>
</dbReference>
<dbReference type="Pfam" id="PF02096">
    <property type="entry name" value="60KD_IMP"/>
    <property type="match status" value="1"/>
</dbReference>
<dbReference type="Pfam" id="PF14849">
    <property type="entry name" value="YidC_periplas"/>
    <property type="match status" value="1"/>
</dbReference>
<dbReference type="PRINTS" id="PR00701">
    <property type="entry name" value="60KDINNERMP"/>
</dbReference>
<dbReference type="PRINTS" id="PR01900">
    <property type="entry name" value="YIDCPROTEIN"/>
</dbReference>
<comment type="function">
    <text evidence="1">Required for the insertion and/or proper folding and/or complex formation of integral membrane proteins into the membrane. Involved in integration of membrane proteins that insert both dependently and independently of the Sec translocase complex, as well as at least some lipoproteins. Aids folding of multispanning membrane proteins.</text>
</comment>
<comment type="subunit">
    <text evidence="1">Interacts with the Sec translocase complex via SecD. Specifically interacts with transmembrane segments of nascent integral membrane proteins during membrane integration.</text>
</comment>
<comment type="subcellular location">
    <subcellularLocation>
        <location evidence="1">Cell inner membrane</location>
        <topology evidence="1">Multi-pass membrane protein</topology>
    </subcellularLocation>
</comment>
<comment type="similarity">
    <text evidence="1">Belongs to the OXA1/ALB3/YidC family. Type 1 subfamily.</text>
</comment>
<evidence type="ECO:0000255" key="1">
    <source>
        <dbReference type="HAMAP-Rule" id="MF_01810"/>
    </source>
</evidence>
<organism>
    <name type="scientific">Xylella fastidiosa (strain M12)</name>
    <dbReference type="NCBI Taxonomy" id="405440"/>
    <lineage>
        <taxon>Bacteria</taxon>
        <taxon>Pseudomonadati</taxon>
        <taxon>Pseudomonadota</taxon>
        <taxon>Gammaproteobacteria</taxon>
        <taxon>Lysobacterales</taxon>
        <taxon>Lysobacteraceae</taxon>
        <taxon>Xylella</taxon>
    </lineage>
</organism>
<gene>
    <name evidence="1" type="primary">yidC</name>
    <name type="ordered locus">Xfasm12_2314</name>
</gene>
<protein>
    <recommendedName>
        <fullName evidence="1">Membrane protein insertase YidC</fullName>
    </recommendedName>
    <alternativeName>
        <fullName evidence="1">Foldase YidC</fullName>
    </alternativeName>
    <alternativeName>
        <fullName evidence="1">Membrane integrase YidC</fullName>
    </alternativeName>
    <alternativeName>
        <fullName evidence="1">Membrane protein YidC</fullName>
    </alternativeName>
</protein>
<keyword id="KW-0997">Cell inner membrane</keyword>
<keyword id="KW-1003">Cell membrane</keyword>
<keyword id="KW-0143">Chaperone</keyword>
<keyword id="KW-0472">Membrane</keyword>
<keyword id="KW-0653">Protein transport</keyword>
<keyword id="KW-0812">Transmembrane</keyword>
<keyword id="KW-1133">Transmembrane helix</keyword>
<keyword id="KW-0813">Transport</keyword>
<accession>B0U6I1</accession>